<gene>
    <name evidence="1" type="primary">hemH</name>
    <name type="ordered locus">BWG_0356</name>
</gene>
<proteinExistence type="inferred from homology"/>
<keyword id="KW-0963">Cytoplasm</keyword>
<keyword id="KW-0350">Heme biosynthesis</keyword>
<keyword id="KW-0408">Iron</keyword>
<keyword id="KW-0456">Lyase</keyword>
<keyword id="KW-0479">Metal-binding</keyword>
<keyword id="KW-0627">Porphyrin biosynthesis</keyword>
<dbReference type="EC" id="4.98.1.1" evidence="1"/>
<dbReference type="EMBL" id="CP001396">
    <property type="protein sequence ID" value="ACR63082.1"/>
    <property type="molecule type" value="Genomic_DNA"/>
</dbReference>
<dbReference type="RefSeq" id="WP_001250103.1">
    <property type="nucleotide sequence ID" value="NC_012759.1"/>
</dbReference>
<dbReference type="SMR" id="C4ZUS9"/>
<dbReference type="KEGG" id="ebw:BWG_0356"/>
<dbReference type="HOGENOM" id="CLU_018884_0_0_6"/>
<dbReference type="BRENDA" id="4.99.1.1">
    <property type="organism ID" value="2026"/>
</dbReference>
<dbReference type="UniPathway" id="UPA00252">
    <property type="reaction ID" value="UER00325"/>
</dbReference>
<dbReference type="GO" id="GO:0005737">
    <property type="term" value="C:cytoplasm"/>
    <property type="evidence" value="ECO:0007669"/>
    <property type="project" value="UniProtKB-SubCell"/>
</dbReference>
<dbReference type="GO" id="GO:0004325">
    <property type="term" value="F:ferrochelatase activity"/>
    <property type="evidence" value="ECO:0007669"/>
    <property type="project" value="UniProtKB-UniRule"/>
</dbReference>
<dbReference type="GO" id="GO:0046872">
    <property type="term" value="F:metal ion binding"/>
    <property type="evidence" value="ECO:0007669"/>
    <property type="project" value="UniProtKB-KW"/>
</dbReference>
<dbReference type="GO" id="GO:0006783">
    <property type="term" value="P:heme biosynthetic process"/>
    <property type="evidence" value="ECO:0007669"/>
    <property type="project" value="UniProtKB-UniRule"/>
</dbReference>
<dbReference type="CDD" id="cd00419">
    <property type="entry name" value="Ferrochelatase_C"/>
    <property type="match status" value="1"/>
</dbReference>
<dbReference type="CDD" id="cd03411">
    <property type="entry name" value="Ferrochelatase_N"/>
    <property type="match status" value="1"/>
</dbReference>
<dbReference type="FunFam" id="3.40.50.1400:FF:000004">
    <property type="entry name" value="Ferrochelatase"/>
    <property type="match status" value="1"/>
</dbReference>
<dbReference type="Gene3D" id="3.40.50.1400">
    <property type="match status" value="2"/>
</dbReference>
<dbReference type="HAMAP" id="MF_00323">
    <property type="entry name" value="Ferrochelatase"/>
    <property type="match status" value="1"/>
</dbReference>
<dbReference type="InterPro" id="IPR001015">
    <property type="entry name" value="Ferrochelatase"/>
</dbReference>
<dbReference type="InterPro" id="IPR019772">
    <property type="entry name" value="Ferrochelatase_AS"/>
</dbReference>
<dbReference type="InterPro" id="IPR033644">
    <property type="entry name" value="Ferrochelatase_C"/>
</dbReference>
<dbReference type="InterPro" id="IPR033659">
    <property type="entry name" value="Ferrochelatase_N"/>
</dbReference>
<dbReference type="NCBIfam" id="TIGR00109">
    <property type="entry name" value="hemH"/>
    <property type="match status" value="1"/>
</dbReference>
<dbReference type="PANTHER" id="PTHR11108">
    <property type="entry name" value="FERROCHELATASE"/>
    <property type="match status" value="1"/>
</dbReference>
<dbReference type="PANTHER" id="PTHR11108:SF1">
    <property type="entry name" value="FERROCHELATASE, MITOCHONDRIAL"/>
    <property type="match status" value="1"/>
</dbReference>
<dbReference type="Pfam" id="PF00762">
    <property type="entry name" value="Ferrochelatase"/>
    <property type="match status" value="1"/>
</dbReference>
<dbReference type="SUPFAM" id="SSF53800">
    <property type="entry name" value="Chelatase"/>
    <property type="match status" value="1"/>
</dbReference>
<dbReference type="PROSITE" id="PS00534">
    <property type="entry name" value="FERROCHELATASE"/>
    <property type="match status" value="1"/>
</dbReference>
<sequence length="320" mass="35884">MRQTKTGILLANLGTPDAPTPEAVKRYLKQFLSDRRVVDTSRLLWWPLLRGVILPLRSPRVAKLYASVWMEGGSPLMVYSRQQQQALAQRLPEMPVALGMSYGSPSLESAVDELLAEHVDHIVVLPLYPQFSCSTVGAVWDELARILARKRSIPGISFIRDYADNHDYINALANSVRASFAKHGEPDLLLLSYHGIPQRYADEGDDYPQRCRTTTRELASALGMAPEKVMMTFQSRFGREPWLMPYTDETLKMLGEKGVGHIQVMCPGFAADCLETLEEIAEQNREVFLGAGGKKYEYIPALNATPEHIEMMANLVAAYR</sequence>
<name>HEMH_ECOBW</name>
<organism>
    <name type="scientific">Escherichia coli (strain K12 / MC4100 / BW2952)</name>
    <dbReference type="NCBI Taxonomy" id="595496"/>
    <lineage>
        <taxon>Bacteria</taxon>
        <taxon>Pseudomonadati</taxon>
        <taxon>Pseudomonadota</taxon>
        <taxon>Gammaproteobacteria</taxon>
        <taxon>Enterobacterales</taxon>
        <taxon>Enterobacteriaceae</taxon>
        <taxon>Escherichia</taxon>
    </lineage>
</organism>
<evidence type="ECO:0000255" key="1">
    <source>
        <dbReference type="HAMAP-Rule" id="MF_00323"/>
    </source>
</evidence>
<reference key="1">
    <citation type="journal article" date="2009" name="J. Bacteriol.">
        <title>Genomic sequencing reveals regulatory mutations and recombinational events in the widely used MC4100 lineage of Escherichia coli K-12.</title>
        <authorList>
            <person name="Ferenci T."/>
            <person name="Zhou Z."/>
            <person name="Betteridge T."/>
            <person name="Ren Y."/>
            <person name="Liu Y."/>
            <person name="Feng L."/>
            <person name="Reeves P.R."/>
            <person name="Wang L."/>
        </authorList>
    </citation>
    <scope>NUCLEOTIDE SEQUENCE [LARGE SCALE GENOMIC DNA]</scope>
    <source>
        <strain>K12 / MC4100 / BW2952</strain>
    </source>
</reference>
<comment type="function">
    <text evidence="1">Catalyzes the ferrous insertion into protoporphyrin IX.</text>
</comment>
<comment type="catalytic activity">
    <reaction evidence="1">
        <text>heme b + 2 H(+) = protoporphyrin IX + Fe(2+)</text>
        <dbReference type="Rhea" id="RHEA:22584"/>
        <dbReference type="ChEBI" id="CHEBI:15378"/>
        <dbReference type="ChEBI" id="CHEBI:29033"/>
        <dbReference type="ChEBI" id="CHEBI:57306"/>
        <dbReference type="ChEBI" id="CHEBI:60344"/>
        <dbReference type="EC" id="4.98.1.1"/>
    </reaction>
</comment>
<comment type="pathway">
    <text evidence="1">Porphyrin-containing compound metabolism; protoheme biosynthesis; protoheme from protoporphyrin-IX: step 1/1.</text>
</comment>
<comment type="subunit">
    <text evidence="1">Monomer.</text>
</comment>
<comment type="subcellular location">
    <subcellularLocation>
        <location evidence="1">Cytoplasm</location>
    </subcellularLocation>
</comment>
<comment type="similarity">
    <text evidence="1">Belongs to the ferrochelatase family.</text>
</comment>
<feature type="chain" id="PRO_1000205151" description="Ferrochelatase">
    <location>
        <begin position="1"/>
        <end position="320"/>
    </location>
</feature>
<feature type="binding site" evidence="1">
    <location>
        <position position="194"/>
    </location>
    <ligand>
        <name>Fe cation</name>
        <dbReference type="ChEBI" id="CHEBI:24875"/>
    </ligand>
</feature>
<feature type="binding site" evidence="1">
    <location>
        <position position="275"/>
    </location>
    <ligand>
        <name>Fe cation</name>
        <dbReference type="ChEBI" id="CHEBI:24875"/>
    </ligand>
</feature>
<protein>
    <recommendedName>
        <fullName evidence="1">Ferrochelatase</fullName>
        <ecNumber evidence="1">4.98.1.1</ecNumber>
    </recommendedName>
    <alternativeName>
        <fullName evidence="1">Heme synthase</fullName>
    </alternativeName>
    <alternativeName>
        <fullName evidence="1">Protoheme ferro-lyase</fullName>
    </alternativeName>
</protein>
<accession>C4ZUS9</accession>